<comment type="function">
    <text evidence="1">Part of the phosphoribosylformylglycinamidine synthase complex involved in the purines biosynthetic pathway. Catalyzes the ATP-dependent conversion of formylglycinamide ribonucleotide (FGAR) and glutamine to yield formylglycinamidine ribonucleotide (FGAM) and glutamate. The FGAM synthase complex is composed of three subunits. PurQ produces an ammonia molecule by converting glutamine to glutamate. PurL transfers the ammonia molecule to FGAR to form FGAM in an ATP-dependent manner. PurS interacts with PurQ and PurL and is thought to assist in the transfer of the ammonia molecule from PurQ to PurL.</text>
</comment>
<comment type="catalytic activity">
    <reaction evidence="1">
        <text>N(2)-formyl-N(1)-(5-phospho-beta-D-ribosyl)glycinamide + L-glutamine + ATP + H2O = 2-formamido-N(1)-(5-O-phospho-beta-D-ribosyl)acetamidine + L-glutamate + ADP + phosphate + H(+)</text>
        <dbReference type="Rhea" id="RHEA:17129"/>
        <dbReference type="ChEBI" id="CHEBI:15377"/>
        <dbReference type="ChEBI" id="CHEBI:15378"/>
        <dbReference type="ChEBI" id="CHEBI:29985"/>
        <dbReference type="ChEBI" id="CHEBI:30616"/>
        <dbReference type="ChEBI" id="CHEBI:43474"/>
        <dbReference type="ChEBI" id="CHEBI:58359"/>
        <dbReference type="ChEBI" id="CHEBI:147286"/>
        <dbReference type="ChEBI" id="CHEBI:147287"/>
        <dbReference type="ChEBI" id="CHEBI:456216"/>
        <dbReference type="EC" id="6.3.5.3"/>
    </reaction>
</comment>
<comment type="catalytic activity">
    <reaction evidence="1">
        <text>L-glutamine + H2O = L-glutamate + NH4(+)</text>
        <dbReference type="Rhea" id="RHEA:15889"/>
        <dbReference type="ChEBI" id="CHEBI:15377"/>
        <dbReference type="ChEBI" id="CHEBI:28938"/>
        <dbReference type="ChEBI" id="CHEBI:29985"/>
        <dbReference type="ChEBI" id="CHEBI:58359"/>
        <dbReference type="EC" id="3.5.1.2"/>
    </reaction>
</comment>
<comment type="pathway">
    <text evidence="1">Purine metabolism; IMP biosynthesis via de novo pathway; 5-amino-1-(5-phospho-D-ribosyl)imidazole from N(2)-formyl-N(1)-(5-phospho-D-ribosyl)glycinamide: step 1/2.</text>
</comment>
<comment type="subunit">
    <text evidence="1">Part of the FGAM synthase complex composed of 1 PurL, 1 PurQ and 2 PurS subunits.</text>
</comment>
<comment type="subcellular location">
    <subcellularLocation>
        <location evidence="1">Cytoplasm</location>
    </subcellularLocation>
</comment>
<gene>
    <name evidence="1" type="primary">purQ</name>
    <name type="ordered locus">Nham_1635</name>
</gene>
<keyword id="KW-0067">ATP-binding</keyword>
<keyword id="KW-0963">Cytoplasm</keyword>
<keyword id="KW-0315">Glutamine amidotransferase</keyword>
<keyword id="KW-0378">Hydrolase</keyword>
<keyword id="KW-0436">Ligase</keyword>
<keyword id="KW-0547">Nucleotide-binding</keyword>
<keyword id="KW-0658">Purine biosynthesis</keyword>
<keyword id="KW-1185">Reference proteome</keyword>
<evidence type="ECO:0000255" key="1">
    <source>
        <dbReference type="HAMAP-Rule" id="MF_00421"/>
    </source>
</evidence>
<feature type="chain" id="PRO_0000252713" description="Phosphoribosylformylglycinamidine synthase subunit PurQ">
    <location>
        <begin position="1"/>
        <end position="233"/>
    </location>
</feature>
<feature type="domain" description="Glutamine amidotransferase type-1" evidence="1">
    <location>
        <begin position="3"/>
        <end position="233"/>
    </location>
</feature>
<feature type="active site" description="Nucleophile" evidence="1">
    <location>
        <position position="87"/>
    </location>
</feature>
<feature type="active site" evidence="1">
    <location>
        <position position="204"/>
    </location>
</feature>
<feature type="active site" evidence="1">
    <location>
        <position position="206"/>
    </location>
</feature>
<name>PURQ_NITHX</name>
<sequence>MKSAILVFPGINRERDMARALKLISGHEPAMVWHAETSLPKGTDLVVMPGGFSYGDYLRCGAIAARSPVMDAVRAFAADGGLVLGVCNGFQILCESGLLPGILMRNARLKFICHDVHLRVERSDTPFTRGYNAGQVIRVPVAHGEGNYAADEETIRRLEGEGRVLYRYCSATGEIGDTHNINGAAQSIAGIVNVRGNVLGMMPHPENHVEDIMGCTDGRGLFAGLVAHLERAA</sequence>
<organism>
    <name type="scientific">Nitrobacter hamburgensis (strain DSM 10229 / NCIMB 13809 / X14)</name>
    <dbReference type="NCBI Taxonomy" id="323097"/>
    <lineage>
        <taxon>Bacteria</taxon>
        <taxon>Pseudomonadati</taxon>
        <taxon>Pseudomonadota</taxon>
        <taxon>Alphaproteobacteria</taxon>
        <taxon>Hyphomicrobiales</taxon>
        <taxon>Nitrobacteraceae</taxon>
        <taxon>Nitrobacter</taxon>
    </lineage>
</organism>
<accession>Q1QMU3</accession>
<protein>
    <recommendedName>
        <fullName evidence="1">Phosphoribosylformylglycinamidine synthase subunit PurQ</fullName>
        <shortName evidence="1">FGAM synthase</shortName>
        <ecNumber evidence="1">6.3.5.3</ecNumber>
    </recommendedName>
    <alternativeName>
        <fullName evidence="1">Formylglycinamide ribonucleotide amidotransferase subunit I</fullName>
        <shortName evidence="1">FGAR amidotransferase I</shortName>
        <shortName evidence="1">FGAR-AT I</shortName>
    </alternativeName>
    <alternativeName>
        <fullName evidence="1">Glutaminase PurQ</fullName>
        <ecNumber evidence="1">3.5.1.2</ecNumber>
    </alternativeName>
    <alternativeName>
        <fullName evidence="1">Phosphoribosylformylglycinamidine synthase subunit I</fullName>
    </alternativeName>
</protein>
<reference key="1">
    <citation type="submission" date="2006-03" db="EMBL/GenBank/DDBJ databases">
        <title>Complete sequence of chromosome of Nitrobacter hamburgensis X14.</title>
        <authorList>
            <consortium name="US DOE Joint Genome Institute"/>
            <person name="Copeland A."/>
            <person name="Lucas S."/>
            <person name="Lapidus A."/>
            <person name="Barry K."/>
            <person name="Detter J.C."/>
            <person name="Glavina del Rio T."/>
            <person name="Hammon N."/>
            <person name="Israni S."/>
            <person name="Dalin E."/>
            <person name="Tice H."/>
            <person name="Pitluck S."/>
            <person name="Chain P."/>
            <person name="Malfatti S."/>
            <person name="Shin M."/>
            <person name="Vergez L."/>
            <person name="Schmutz J."/>
            <person name="Larimer F."/>
            <person name="Land M."/>
            <person name="Hauser L."/>
            <person name="Kyrpides N."/>
            <person name="Ivanova N."/>
            <person name="Ward B."/>
            <person name="Arp D."/>
            <person name="Klotz M."/>
            <person name="Stein L."/>
            <person name="O'Mullan G."/>
            <person name="Starkenburg S."/>
            <person name="Sayavedra L."/>
            <person name="Poret-Peterson A.T."/>
            <person name="Gentry M.E."/>
            <person name="Bruce D."/>
            <person name="Richardson P."/>
        </authorList>
    </citation>
    <scope>NUCLEOTIDE SEQUENCE [LARGE SCALE GENOMIC DNA]</scope>
    <source>
        <strain>DSM 10229 / NCIMB 13809 / X14</strain>
    </source>
</reference>
<proteinExistence type="inferred from homology"/>
<dbReference type="EC" id="6.3.5.3" evidence="1"/>
<dbReference type="EC" id="3.5.1.2" evidence="1"/>
<dbReference type="EMBL" id="CP000319">
    <property type="protein sequence ID" value="ABE62454.1"/>
    <property type="molecule type" value="Genomic_DNA"/>
</dbReference>
<dbReference type="RefSeq" id="WP_011510137.1">
    <property type="nucleotide sequence ID" value="NC_007964.1"/>
</dbReference>
<dbReference type="SMR" id="Q1QMU3"/>
<dbReference type="STRING" id="323097.Nham_1635"/>
<dbReference type="KEGG" id="nha:Nham_1635"/>
<dbReference type="eggNOG" id="COG0047">
    <property type="taxonomic scope" value="Bacteria"/>
</dbReference>
<dbReference type="HOGENOM" id="CLU_001031_3_1_5"/>
<dbReference type="OrthoDB" id="9804441at2"/>
<dbReference type="UniPathway" id="UPA00074">
    <property type="reaction ID" value="UER00128"/>
</dbReference>
<dbReference type="Proteomes" id="UP000001953">
    <property type="component" value="Chromosome"/>
</dbReference>
<dbReference type="GO" id="GO:0005737">
    <property type="term" value="C:cytoplasm"/>
    <property type="evidence" value="ECO:0007669"/>
    <property type="project" value="UniProtKB-SubCell"/>
</dbReference>
<dbReference type="GO" id="GO:0005524">
    <property type="term" value="F:ATP binding"/>
    <property type="evidence" value="ECO:0007669"/>
    <property type="project" value="UniProtKB-KW"/>
</dbReference>
<dbReference type="GO" id="GO:0004359">
    <property type="term" value="F:glutaminase activity"/>
    <property type="evidence" value="ECO:0007669"/>
    <property type="project" value="UniProtKB-EC"/>
</dbReference>
<dbReference type="GO" id="GO:0004642">
    <property type="term" value="F:phosphoribosylformylglycinamidine synthase activity"/>
    <property type="evidence" value="ECO:0007669"/>
    <property type="project" value="UniProtKB-UniRule"/>
</dbReference>
<dbReference type="GO" id="GO:0006189">
    <property type="term" value="P:'de novo' IMP biosynthetic process"/>
    <property type="evidence" value="ECO:0007669"/>
    <property type="project" value="UniProtKB-UniRule"/>
</dbReference>
<dbReference type="CDD" id="cd01740">
    <property type="entry name" value="GATase1_FGAR_AT"/>
    <property type="match status" value="1"/>
</dbReference>
<dbReference type="Gene3D" id="3.40.50.880">
    <property type="match status" value="1"/>
</dbReference>
<dbReference type="HAMAP" id="MF_00421">
    <property type="entry name" value="PurQ"/>
    <property type="match status" value="1"/>
</dbReference>
<dbReference type="InterPro" id="IPR029062">
    <property type="entry name" value="Class_I_gatase-like"/>
</dbReference>
<dbReference type="InterPro" id="IPR010075">
    <property type="entry name" value="PRibForGlyAmidine_synth_PurQ"/>
</dbReference>
<dbReference type="NCBIfam" id="TIGR01737">
    <property type="entry name" value="FGAM_synth_I"/>
    <property type="match status" value="1"/>
</dbReference>
<dbReference type="NCBIfam" id="NF002957">
    <property type="entry name" value="PRK03619.1"/>
    <property type="match status" value="1"/>
</dbReference>
<dbReference type="PANTHER" id="PTHR47552">
    <property type="entry name" value="PHOSPHORIBOSYLFORMYLGLYCINAMIDINE SYNTHASE SUBUNIT PURQ"/>
    <property type="match status" value="1"/>
</dbReference>
<dbReference type="PANTHER" id="PTHR47552:SF1">
    <property type="entry name" value="PHOSPHORIBOSYLFORMYLGLYCINAMIDINE SYNTHASE SUBUNIT PURQ"/>
    <property type="match status" value="1"/>
</dbReference>
<dbReference type="Pfam" id="PF13507">
    <property type="entry name" value="GATase_5"/>
    <property type="match status" value="1"/>
</dbReference>
<dbReference type="PIRSF" id="PIRSF001586">
    <property type="entry name" value="FGAM_synth_I"/>
    <property type="match status" value="1"/>
</dbReference>
<dbReference type="SMART" id="SM01211">
    <property type="entry name" value="GATase_5"/>
    <property type="match status" value="1"/>
</dbReference>
<dbReference type="SUPFAM" id="SSF52317">
    <property type="entry name" value="Class I glutamine amidotransferase-like"/>
    <property type="match status" value="1"/>
</dbReference>
<dbReference type="PROSITE" id="PS51273">
    <property type="entry name" value="GATASE_TYPE_1"/>
    <property type="match status" value="1"/>
</dbReference>